<keyword id="KW-0067">ATP-binding</keyword>
<keyword id="KW-0963">Cytoplasm</keyword>
<keyword id="KW-0418">Kinase</keyword>
<keyword id="KW-0547">Nucleotide-binding</keyword>
<keyword id="KW-1185">Reference proteome</keyword>
<keyword id="KW-0808">Transferase</keyword>
<gene>
    <name evidence="1" type="primary">buk</name>
    <name type="ordered locus">BA_4386</name>
    <name type="ordered locus">GBAA_4386</name>
    <name type="ordered locus">BAS4069</name>
</gene>
<proteinExistence type="inferred from homology"/>
<organism>
    <name type="scientific">Bacillus anthracis</name>
    <dbReference type="NCBI Taxonomy" id="1392"/>
    <lineage>
        <taxon>Bacteria</taxon>
        <taxon>Bacillati</taxon>
        <taxon>Bacillota</taxon>
        <taxon>Bacilli</taxon>
        <taxon>Bacillales</taxon>
        <taxon>Bacillaceae</taxon>
        <taxon>Bacillus</taxon>
        <taxon>Bacillus cereus group</taxon>
    </lineage>
</organism>
<protein>
    <recommendedName>
        <fullName evidence="1">Probable butyrate kinase</fullName>
        <shortName evidence="1">BK</shortName>
        <ecNumber evidence="1">2.7.2.7</ecNumber>
    </recommendedName>
    <alternativeName>
        <fullName evidence="1">Branched-chain carboxylic acid kinase</fullName>
    </alternativeName>
</protein>
<sequence length="367" mass="39969">MSVNRILVINPGSTSTKIGVFDNERPVLEETIRHDEEQIGKYKRIIDQYEFRKETILEVLHSHGINISKLNAVCGRGGLLRPIEGGTYTVNDAMLEDLKNGFSGHHASNLGGILAYEIASGLNIPAFIVDPVVVDEMEPIARISGIAGMERKSIFHALNQKAVARKVAEELNHKYEDLNLLVTHMGGGITVGAHKKGKVIDVNNGLNGEGPFSPERAGTVPVGQLVEMCFSGEYYRDEMVKKLVGQGGLVSLIGTNDAIKVEQMVEKGDPEATLIYKAMAYQVAKEIGGASAVLHGKIDAIVLTGGLAYSKILVDEIKERVDWIADVIVHPGEDELQALAEGALRVLREEEAPKEYIVREKETVARG</sequence>
<name>BUK_BACAN</name>
<comment type="catalytic activity">
    <reaction evidence="1">
        <text>butanoate + ATP = butanoyl phosphate + ADP</text>
        <dbReference type="Rhea" id="RHEA:13585"/>
        <dbReference type="ChEBI" id="CHEBI:17968"/>
        <dbReference type="ChEBI" id="CHEBI:30616"/>
        <dbReference type="ChEBI" id="CHEBI:58079"/>
        <dbReference type="ChEBI" id="CHEBI:456216"/>
        <dbReference type="EC" id="2.7.2.7"/>
    </reaction>
</comment>
<comment type="subcellular location">
    <subcellularLocation>
        <location evidence="1">Cytoplasm</location>
    </subcellularLocation>
</comment>
<comment type="similarity">
    <text evidence="1">Belongs to the acetokinase family.</text>
</comment>
<evidence type="ECO:0000255" key="1">
    <source>
        <dbReference type="HAMAP-Rule" id="MF_00542"/>
    </source>
</evidence>
<accession>Q81M67</accession>
<accession>Q6HTL9</accession>
<accession>Q6KMW0</accession>
<reference key="1">
    <citation type="journal article" date="2003" name="Nature">
        <title>The genome sequence of Bacillus anthracis Ames and comparison to closely related bacteria.</title>
        <authorList>
            <person name="Read T.D."/>
            <person name="Peterson S.N."/>
            <person name="Tourasse N.J."/>
            <person name="Baillie L.W."/>
            <person name="Paulsen I.T."/>
            <person name="Nelson K.E."/>
            <person name="Tettelin H."/>
            <person name="Fouts D.E."/>
            <person name="Eisen J.A."/>
            <person name="Gill S.R."/>
            <person name="Holtzapple E.K."/>
            <person name="Okstad O.A."/>
            <person name="Helgason E."/>
            <person name="Rilstone J."/>
            <person name="Wu M."/>
            <person name="Kolonay J.F."/>
            <person name="Beanan M.J."/>
            <person name="Dodson R.J."/>
            <person name="Brinkac L.M."/>
            <person name="Gwinn M.L."/>
            <person name="DeBoy R.T."/>
            <person name="Madpu R."/>
            <person name="Daugherty S.C."/>
            <person name="Durkin A.S."/>
            <person name="Haft D.H."/>
            <person name="Nelson W.C."/>
            <person name="Peterson J.D."/>
            <person name="Pop M."/>
            <person name="Khouri H.M."/>
            <person name="Radune D."/>
            <person name="Benton J.L."/>
            <person name="Mahamoud Y."/>
            <person name="Jiang L."/>
            <person name="Hance I.R."/>
            <person name="Weidman J.F."/>
            <person name="Berry K.J."/>
            <person name="Plaut R.D."/>
            <person name="Wolf A.M."/>
            <person name="Watkins K.L."/>
            <person name="Nierman W.C."/>
            <person name="Hazen A."/>
            <person name="Cline R.T."/>
            <person name="Redmond C."/>
            <person name="Thwaite J.E."/>
            <person name="White O."/>
            <person name="Salzberg S.L."/>
            <person name="Thomason B."/>
            <person name="Friedlander A.M."/>
            <person name="Koehler T.M."/>
            <person name="Hanna P.C."/>
            <person name="Kolstoe A.-B."/>
            <person name="Fraser C.M."/>
        </authorList>
    </citation>
    <scope>NUCLEOTIDE SEQUENCE [LARGE SCALE GENOMIC DNA]</scope>
    <source>
        <strain>Ames / isolate Porton</strain>
    </source>
</reference>
<reference key="2">
    <citation type="journal article" date="2009" name="J. Bacteriol.">
        <title>The complete genome sequence of Bacillus anthracis Ames 'Ancestor'.</title>
        <authorList>
            <person name="Ravel J."/>
            <person name="Jiang L."/>
            <person name="Stanley S.T."/>
            <person name="Wilson M.R."/>
            <person name="Decker R.S."/>
            <person name="Read T.D."/>
            <person name="Worsham P."/>
            <person name="Keim P.S."/>
            <person name="Salzberg S.L."/>
            <person name="Fraser-Liggett C.M."/>
            <person name="Rasko D.A."/>
        </authorList>
    </citation>
    <scope>NUCLEOTIDE SEQUENCE [LARGE SCALE GENOMIC DNA]</scope>
    <source>
        <strain>Ames ancestor</strain>
    </source>
</reference>
<reference key="3">
    <citation type="submission" date="2004-01" db="EMBL/GenBank/DDBJ databases">
        <title>Complete genome sequence of Bacillus anthracis Sterne.</title>
        <authorList>
            <person name="Brettin T.S."/>
            <person name="Bruce D."/>
            <person name="Challacombe J.F."/>
            <person name="Gilna P."/>
            <person name="Han C."/>
            <person name="Hill K."/>
            <person name="Hitchcock P."/>
            <person name="Jackson P."/>
            <person name="Keim P."/>
            <person name="Longmire J."/>
            <person name="Lucas S."/>
            <person name="Okinaka R."/>
            <person name="Richardson P."/>
            <person name="Rubin E."/>
            <person name="Tice H."/>
        </authorList>
    </citation>
    <scope>NUCLEOTIDE SEQUENCE [LARGE SCALE GENOMIC DNA]</scope>
    <source>
        <strain>Sterne</strain>
    </source>
</reference>
<dbReference type="EC" id="2.7.2.7" evidence="1"/>
<dbReference type="EMBL" id="AE016879">
    <property type="protein sequence ID" value="AAP28102.1"/>
    <property type="molecule type" value="Genomic_DNA"/>
</dbReference>
<dbReference type="EMBL" id="AE017334">
    <property type="protein sequence ID" value="AAT33505.1"/>
    <property type="molecule type" value="Genomic_DNA"/>
</dbReference>
<dbReference type="EMBL" id="AE017225">
    <property type="protein sequence ID" value="AAT56370.1"/>
    <property type="molecule type" value="Genomic_DNA"/>
</dbReference>
<dbReference type="RefSeq" id="NP_846616.1">
    <property type="nucleotide sequence ID" value="NC_003997.3"/>
</dbReference>
<dbReference type="RefSeq" id="WP_000115773.1">
    <property type="nucleotide sequence ID" value="NZ_WXXJ01000027.1"/>
</dbReference>
<dbReference type="RefSeq" id="YP_030319.1">
    <property type="nucleotide sequence ID" value="NC_005945.1"/>
</dbReference>
<dbReference type="SMR" id="Q81M67"/>
<dbReference type="IntAct" id="Q81M67">
    <property type="interactions" value="2"/>
</dbReference>
<dbReference type="STRING" id="261594.GBAA_4386"/>
<dbReference type="DNASU" id="1087622"/>
<dbReference type="GeneID" id="45024047"/>
<dbReference type="KEGG" id="ban:BA_4386"/>
<dbReference type="KEGG" id="bar:GBAA_4386"/>
<dbReference type="KEGG" id="bat:BAS4069"/>
<dbReference type="PATRIC" id="fig|198094.11.peg.4355"/>
<dbReference type="eggNOG" id="COG3426">
    <property type="taxonomic scope" value="Bacteria"/>
</dbReference>
<dbReference type="HOGENOM" id="CLU_048716_0_0_9"/>
<dbReference type="OMA" id="FRILTIN"/>
<dbReference type="OrthoDB" id="9771859at2"/>
<dbReference type="Proteomes" id="UP000000427">
    <property type="component" value="Chromosome"/>
</dbReference>
<dbReference type="Proteomes" id="UP000000594">
    <property type="component" value="Chromosome"/>
</dbReference>
<dbReference type="GO" id="GO:0005737">
    <property type="term" value="C:cytoplasm"/>
    <property type="evidence" value="ECO:0007669"/>
    <property type="project" value="UniProtKB-SubCell"/>
</dbReference>
<dbReference type="GO" id="GO:0008776">
    <property type="term" value="F:acetate kinase activity"/>
    <property type="evidence" value="ECO:0007669"/>
    <property type="project" value="TreeGrafter"/>
</dbReference>
<dbReference type="GO" id="GO:0005524">
    <property type="term" value="F:ATP binding"/>
    <property type="evidence" value="ECO:0007669"/>
    <property type="project" value="UniProtKB-KW"/>
</dbReference>
<dbReference type="GO" id="GO:0047761">
    <property type="term" value="F:butyrate kinase activity"/>
    <property type="evidence" value="ECO:0007669"/>
    <property type="project" value="UniProtKB-UniRule"/>
</dbReference>
<dbReference type="GO" id="GO:0006083">
    <property type="term" value="P:acetate metabolic process"/>
    <property type="evidence" value="ECO:0007669"/>
    <property type="project" value="TreeGrafter"/>
</dbReference>
<dbReference type="CDD" id="cd24011">
    <property type="entry name" value="ASKHA_NBD_BK"/>
    <property type="match status" value="1"/>
</dbReference>
<dbReference type="Gene3D" id="3.30.420.40">
    <property type="match status" value="2"/>
</dbReference>
<dbReference type="HAMAP" id="MF_00542">
    <property type="entry name" value="Butyrate_kinase"/>
    <property type="match status" value="1"/>
</dbReference>
<dbReference type="InterPro" id="IPR000890">
    <property type="entry name" value="Aliphatic_acid_kin_short-chain"/>
</dbReference>
<dbReference type="InterPro" id="IPR023865">
    <property type="entry name" value="Aliphatic_acid_kinase_CS"/>
</dbReference>
<dbReference type="InterPro" id="IPR043129">
    <property type="entry name" value="ATPase_NBD"/>
</dbReference>
<dbReference type="InterPro" id="IPR011245">
    <property type="entry name" value="Butyrate_kin"/>
</dbReference>
<dbReference type="NCBIfam" id="TIGR02707">
    <property type="entry name" value="butyr_kinase"/>
    <property type="match status" value="1"/>
</dbReference>
<dbReference type="NCBIfam" id="NF002834">
    <property type="entry name" value="PRK03011.1-5"/>
    <property type="match status" value="1"/>
</dbReference>
<dbReference type="PANTHER" id="PTHR21060">
    <property type="entry name" value="ACETATE KINASE"/>
    <property type="match status" value="1"/>
</dbReference>
<dbReference type="PANTHER" id="PTHR21060:SF3">
    <property type="entry name" value="BUTYRATE KINASE 2-RELATED"/>
    <property type="match status" value="1"/>
</dbReference>
<dbReference type="Pfam" id="PF00871">
    <property type="entry name" value="Acetate_kinase"/>
    <property type="match status" value="1"/>
</dbReference>
<dbReference type="PIRSF" id="PIRSF036458">
    <property type="entry name" value="Butyrate_kin"/>
    <property type="match status" value="1"/>
</dbReference>
<dbReference type="PRINTS" id="PR00471">
    <property type="entry name" value="ACETATEKNASE"/>
</dbReference>
<dbReference type="SUPFAM" id="SSF53067">
    <property type="entry name" value="Actin-like ATPase domain"/>
    <property type="match status" value="2"/>
</dbReference>
<dbReference type="PROSITE" id="PS01075">
    <property type="entry name" value="ACETATE_KINASE_1"/>
    <property type="match status" value="1"/>
</dbReference>
<dbReference type="PROSITE" id="PS01076">
    <property type="entry name" value="ACETATE_KINASE_2"/>
    <property type="match status" value="1"/>
</dbReference>
<feature type="chain" id="PRO_0000107663" description="Probable butyrate kinase">
    <location>
        <begin position="1"/>
        <end position="367"/>
    </location>
</feature>